<protein>
    <recommendedName>
        <fullName>Type IV secretion system protein PtlA homolog</fullName>
    </recommendedName>
</protein>
<dbReference type="EMBL" id="BX640451">
    <property type="protein sequence ID" value="CAE35258.1"/>
    <property type="molecule type" value="Genomic_DNA"/>
</dbReference>
<dbReference type="RefSeq" id="WP_003815857.1">
    <property type="nucleotide sequence ID" value="NC_002927.3"/>
</dbReference>
<dbReference type="KEGG" id="bbr:BB4895"/>
<dbReference type="eggNOG" id="ENOG5033CNI">
    <property type="taxonomic scope" value="Bacteria"/>
</dbReference>
<dbReference type="HOGENOM" id="CLU_155084_1_1_4"/>
<dbReference type="Proteomes" id="UP000001027">
    <property type="component" value="Chromosome"/>
</dbReference>
<dbReference type="GO" id="GO:0005886">
    <property type="term" value="C:plasma membrane"/>
    <property type="evidence" value="ECO:0007669"/>
    <property type="project" value="UniProtKB-SubCell"/>
</dbReference>
<dbReference type="InterPro" id="IPR007039">
    <property type="entry name" value="TrbC/VirB2"/>
</dbReference>
<dbReference type="Pfam" id="PF04956">
    <property type="entry name" value="TrbC"/>
    <property type="match status" value="1"/>
</dbReference>
<reference key="1">
    <citation type="journal article" date="2003" name="Nat. Genet.">
        <title>Comparative analysis of the genome sequences of Bordetella pertussis, Bordetella parapertussis and Bordetella bronchiseptica.</title>
        <authorList>
            <person name="Parkhill J."/>
            <person name="Sebaihia M."/>
            <person name="Preston A."/>
            <person name="Murphy L.D."/>
            <person name="Thomson N.R."/>
            <person name="Harris D.E."/>
            <person name="Holden M.T.G."/>
            <person name="Churcher C.M."/>
            <person name="Bentley S.D."/>
            <person name="Mungall K.L."/>
            <person name="Cerdeno-Tarraga A.-M."/>
            <person name="Temple L."/>
            <person name="James K.D."/>
            <person name="Harris B."/>
            <person name="Quail M.A."/>
            <person name="Achtman M."/>
            <person name="Atkin R."/>
            <person name="Baker S."/>
            <person name="Basham D."/>
            <person name="Bason N."/>
            <person name="Cherevach I."/>
            <person name="Chillingworth T."/>
            <person name="Collins M."/>
            <person name="Cronin A."/>
            <person name="Davis P."/>
            <person name="Doggett J."/>
            <person name="Feltwell T."/>
            <person name="Goble A."/>
            <person name="Hamlin N."/>
            <person name="Hauser H."/>
            <person name="Holroyd S."/>
            <person name="Jagels K."/>
            <person name="Leather S."/>
            <person name="Moule S."/>
            <person name="Norberczak H."/>
            <person name="O'Neil S."/>
            <person name="Ormond D."/>
            <person name="Price C."/>
            <person name="Rabbinowitsch E."/>
            <person name="Rutter S."/>
            <person name="Sanders M."/>
            <person name="Saunders D."/>
            <person name="Seeger K."/>
            <person name="Sharp S."/>
            <person name="Simmonds M."/>
            <person name="Skelton J."/>
            <person name="Squares R."/>
            <person name="Squares S."/>
            <person name="Stevens K."/>
            <person name="Unwin L."/>
            <person name="Whitehead S."/>
            <person name="Barrell B.G."/>
            <person name="Maskell D.J."/>
        </authorList>
    </citation>
    <scope>NUCLEOTIDE SEQUENCE [LARGE SCALE GENOMIC DNA]</scope>
    <source>
        <strain>ATCC BAA-588 / NCTC 13252 / RB50</strain>
    </source>
</reference>
<reference key="2">
    <citation type="journal article" date="1987" name="J. Bacteriol.">
        <title>Bordetella parapertussis and Bordetella bronchiseptica contain transcriptionally silent pertussis toxin genes.</title>
        <authorList>
            <person name="Arico B."/>
            <person name="Rappuoli R."/>
        </authorList>
    </citation>
    <scope>TRANSCRIPTIONAL SILENCING</scope>
    <source>
        <strain>ATCC 4617 / NCIB 9935 / NCTC 8344 / NRRL B-140</strain>
    </source>
</reference>
<reference key="3">
    <citation type="journal article" date="1996" name="Infect. Immun.">
        <title>Analysis of proteins encoded by the ptx and ptl genes of Bordetella bronchiseptica and Bordetella parapertussis.</title>
        <authorList>
            <person name="Hausman S.Z."/>
            <person name="Cherry J.D."/>
            <person name="Heininger U."/>
            <person name="Wirsing von Koenig C.H."/>
            <person name="Burns D.L."/>
        </authorList>
    </citation>
    <scope>POSSIBLE EXPRESSION OF PTL AND PTX PROTEINS UNDER CONDITIONS DIFFERENT FROM B.PERTUSSIS EXPRESSION CONDITIONS</scope>
    <source>
        <strain>ATCC 31437 / Bb55</strain>
    </source>
</reference>
<evidence type="ECO:0000255" key="1"/>
<evidence type="ECO:0000305" key="2"/>
<keyword id="KW-1003">Cell membrane</keyword>
<keyword id="KW-0472">Membrane</keyword>
<keyword id="KW-0732">Signal</keyword>
<keyword id="KW-0812">Transmembrane</keyword>
<keyword id="KW-1133">Transmembrane helix</keyword>
<gene>
    <name type="primary">ptlA</name>
    <name type="ordered locus">BB4895</name>
</gene>
<comment type="subcellular location">
    <subcellularLocation>
        <location evidence="2">Cell membrane</location>
        <topology evidence="2">Multi-pass membrane protein</topology>
    </subcellularLocation>
</comment>
<comment type="similarity">
    <text evidence="2">Belongs to the PtlA family.</text>
</comment>
<comment type="caution">
    <text evidence="2">B.parapertussis and B.bronchiseptica seem not to produce the pertussis toxin (S1, S2, S4, S5 and S3) and ptl proteins (PtlA, PtlB, PtlC, PtlD, PtlE, PtlF, PtlG, PtlH and PtlI) in vivo due to changes in the promoter region of the ptx-ptl operon. However, it is possible that their promoter is active under certain, as-yet-undefined conditions and that B.parapertussis and B.bronchiseptica are therefore capable of producing these proteins.</text>
</comment>
<feature type="signal peptide" evidence="1">
    <location>
        <begin position="1"/>
        <end position="31"/>
    </location>
</feature>
<feature type="chain" id="PRO_0000287401" description="Type IV secretion system protein PtlA homolog">
    <location>
        <begin position="32"/>
        <end position="102"/>
    </location>
</feature>
<feature type="transmembrane region" description="Helical" evidence="1">
    <location>
        <begin position="45"/>
        <end position="65"/>
    </location>
</feature>
<feature type="transmembrane region" description="Helical" evidence="1">
    <location>
        <begin position="77"/>
        <end position="97"/>
    </location>
</feature>
<proteinExistence type="inferred from homology"/>
<accession>Q7WDU3</accession>
<name>PTLA_BORBR</name>
<organism>
    <name type="scientific">Bordetella bronchiseptica (strain ATCC BAA-588 / NCTC 13252 / RB50)</name>
    <name type="common">Alcaligenes bronchisepticus</name>
    <dbReference type="NCBI Taxonomy" id="257310"/>
    <lineage>
        <taxon>Bacteria</taxon>
        <taxon>Pseudomonadati</taxon>
        <taxon>Pseudomonadota</taxon>
        <taxon>Betaproteobacteria</taxon>
        <taxon>Burkholderiales</taxon>
        <taxon>Alcaligenaceae</taxon>
        <taxon>Bordetella</taxon>
    </lineage>
</organism>
<sequence length="102" mass="10880">MNRLKDLGTPRPRLAFMAACILLLATLPDFAQASGGLQRVNSFMAGIVTVLRGASVATVTIAIIWAGYKLLFRHADVLDVVRVVLAGLLIGASAEIARYLLT</sequence>